<organism>
    <name type="scientific">Nostoc sp. (strain PCC 7120 / SAG 25.82 / UTEX 2576)</name>
    <dbReference type="NCBI Taxonomy" id="103690"/>
    <lineage>
        <taxon>Bacteria</taxon>
        <taxon>Bacillati</taxon>
        <taxon>Cyanobacteriota</taxon>
        <taxon>Cyanophyceae</taxon>
        <taxon>Nostocales</taxon>
        <taxon>Nostocaceae</taxon>
        <taxon>Nostoc</taxon>
    </lineage>
</organism>
<comment type="catalytic activity">
    <reaction evidence="1">
        <text>(2R)-3-phosphoglycerate + ATP = (2R)-3-phospho-glyceroyl phosphate + ADP</text>
        <dbReference type="Rhea" id="RHEA:14801"/>
        <dbReference type="ChEBI" id="CHEBI:30616"/>
        <dbReference type="ChEBI" id="CHEBI:57604"/>
        <dbReference type="ChEBI" id="CHEBI:58272"/>
        <dbReference type="ChEBI" id="CHEBI:456216"/>
        <dbReference type="EC" id="2.7.2.3"/>
    </reaction>
</comment>
<comment type="pathway">
    <text evidence="1">Carbohydrate degradation; glycolysis; pyruvate from D-glyceraldehyde 3-phosphate: step 2/5.</text>
</comment>
<comment type="subunit">
    <text evidence="1">Monomer.</text>
</comment>
<comment type="subcellular location">
    <subcellularLocation>
        <location evidence="1">Cytoplasm</location>
    </subcellularLocation>
</comment>
<comment type="mass spectrometry"/>
<comment type="similarity">
    <text evidence="1">Belongs to the phosphoglycerate kinase family.</text>
</comment>
<feature type="chain" id="PRO_0000145897" description="Phosphoglycerate kinase">
    <location>
        <begin position="1"/>
        <end position="400"/>
    </location>
</feature>
<feature type="binding site" evidence="1">
    <location>
        <begin position="24"/>
        <end position="26"/>
    </location>
    <ligand>
        <name>substrate</name>
    </ligand>
</feature>
<feature type="binding site" evidence="1">
    <location>
        <position position="40"/>
    </location>
    <ligand>
        <name>substrate</name>
    </ligand>
</feature>
<feature type="binding site" evidence="1">
    <location>
        <begin position="63"/>
        <end position="66"/>
    </location>
    <ligand>
        <name>substrate</name>
    </ligand>
</feature>
<feature type="binding site" evidence="1">
    <location>
        <position position="121"/>
    </location>
    <ligand>
        <name>substrate</name>
    </ligand>
</feature>
<feature type="binding site" evidence="1">
    <location>
        <position position="154"/>
    </location>
    <ligand>
        <name>substrate</name>
    </ligand>
</feature>
<feature type="binding site" evidence="1">
    <location>
        <position position="205"/>
    </location>
    <ligand>
        <name>ATP</name>
        <dbReference type="ChEBI" id="CHEBI:30616"/>
    </ligand>
</feature>
<feature type="binding site" evidence="1">
    <location>
        <position position="296"/>
    </location>
    <ligand>
        <name>ATP</name>
        <dbReference type="ChEBI" id="CHEBI:30616"/>
    </ligand>
</feature>
<feature type="binding site" evidence="1">
    <location>
        <position position="327"/>
    </location>
    <ligand>
        <name>ATP</name>
        <dbReference type="ChEBI" id="CHEBI:30616"/>
    </ligand>
</feature>
<feature type="binding site" evidence="1">
    <location>
        <begin position="356"/>
        <end position="359"/>
    </location>
    <ligand>
        <name>ATP</name>
        <dbReference type="ChEBI" id="CHEBI:30616"/>
    </ligand>
</feature>
<reference key="1">
    <citation type="journal article" date="2001" name="DNA Res.">
        <title>Complete genomic sequence of the filamentous nitrogen-fixing cyanobacterium Anabaena sp. strain PCC 7120.</title>
        <authorList>
            <person name="Kaneko T."/>
            <person name="Nakamura Y."/>
            <person name="Wolk C.P."/>
            <person name="Kuritz T."/>
            <person name="Sasamoto S."/>
            <person name="Watanabe A."/>
            <person name="Iriguchi M."/>
            <person name="Ishikawa A."/>
            <person name="Kawashima K."/>
            <person name="Kimura T."/>
            <person name="Kishida Y."/>
            <person name="Kohara M."/>
            <person name="Matsumoto M."/>
            <person name="Matsuno A."/>
            <person name="Muraki A."/>
            <person name="Nakazaki N."/>
            <person name="Shimpo S."/>
            <person name="Sugimoto M."/>
            <person name="Takazawa M."/>
            <person name="Yamada M."/>
            <person name="Yasuda M."/>
            <person name="Tabata S."/>
        </authorList>
    </citation>
    <scope>NUCLEOTIDE SEQUENCE [LARGE SCALE GENOMIC DNA]</scope>
    <source>
        <strain>PCC 7120 / SAG 25.82 / UTEX 2576</strain>
    </source>
</reference>
<reference key="2">
    <citation type="submission" date="2008-12" db="UniProtKB">
        <authorList>
            <person name="Singh H."/>
            <person name="Rajaram H."/>
            <person name="Apte S.K."/>
        </authorList>
    </citation>
    <scope>PROTEIN SEQUENCE OF 306-315</scope>
    <scope>MASS SPECTROMETRY</scope>
</reference>
<sequence>MSKKTVASLSAADISGKRALVRVDFNVPLDDQGNITDDTRIRAALPTIQDLTQKGAKVILASHFGRPKGVDEKLRLTPVAKRLSELLGQEVIKTDDSIGDEVAAKVATLQNGQVLLLENVRFYKEEEKNDPEFAKKLAANADFYVNDAFGTAHRAHASTEGVTKFLSPSVAGYLVEKELQYLQSAIENPQRPLAAIIGGSKVSSKIGVIETLLEKCDKLIIGGGMIFTFYKARGLNVGKSLVEEDKLELAKSLEAKAKERGVSLLLPTDVVLADNFAPDANSQTVSIENIPDGWMGLDIGPDSVKVFQAALADTKTVIWNGPMGVFEFDKFAAGTEAIAHTLAEIGKTGTTTIIGGGDSVAAVEKVGLADQMSHISTGGGASLELLEGKVLPGIAALDEA</sequence>
<keyword id="KW-0067">ATP-binding</keyword>
<keyword id="KW-0963">Cytoplasm</keyword>
<keyword id="KW-0903">Direct protein sequencing</keyword>
<keyword id="KW-0324">Glycolysis</keyword>
<keyword id="KW-0418">Kinase</keyword>
<keyword id="KW-0547">Nucleotide-binding</keyword>
<keyword id="KW-1185">Reference proteome</keyword>
<keyword id="KW-0808">Transferase</keyword>
<dbReference type="EC" id="2.7.2.3" evidence="1"/>
<dbReference type="EMBL" id="BA000019">
    <property type="protein sequence ID" value="BAB75830.1"/>
    <property type="molecule type" value="Genomic_DNA"/>
</dbReference>
<dbReference type="PIR" id="AD2322">
    <property type="entry name" value="AD2322"/>
</dbReference>
<dbReference type="RefSeq" id="WP_010998270.1">
    <property type="nucleotide sequence ID" value="NZ_RSCN01000010.1"/>
</dbReference>
<dbReference type="SMR" id="Q8YPR1"/>
<dbReference type="STRING" id="103690.gene:10496179"/>
<dbReference type="KEGG" id="ana:all4131"/>
<dbReference type="eggNOG" id="COG0126">
    <property type="taxonomic scope" value="Bacteria"/>
</dbReference>
<dbReference type="OrthoDB" id="9808460at2"/>
<dbReference type="UniPathway" id="UPA00109">
    <property type="reaction ID" value="UER00185"/>
</dbReference>
<dbReference type="Proteomes" id="UP000002483">
    <property type="component" value="Chromosome"/>
</dbReference>
<dbReference type="GO" id="GO:0005829">
    <property type="term" value="C:cytosol"/>
    <property type="evidence" value="ECO:0007669"/>
    <property type="project" value="TreeGrafter"/>
</dbReference>
<dbReference type="GO" id="GO:0043531">
    <property type="term" value="F:ADP binding"/>
    <property type="evidence" value="ECO:0007669"/>
    <property type="project" value="TreeGrafter"/>
</dbReference>
<dbReference type="GO" id="GO:0005524">
    <property type="term" value="F:ATP binding"/>
    <property type="evidence" value="ECO:0007669"/>
    <property type="project" value="UniProtKB-KW"/>
</dbReference>
<dbReference type="GO" id="GO:0004618">
    <property type="term" value="F:phosphoglycerate kinase activity"/>
    <property type="evidence" value="ECO:0007669"/>
    <property type="project" value="UniProtKB-UniRule"/>
</dbReference>
<dbReference type="GO" id="GO:0006094">
    <property type="term" value="P:gluconeogenesis"/>
    <property type="evidence" value="ECO:0007669"/>
    <property type="project" value="TreeGrafter"/>
</dbReference>
<dbReference type="GO" id="GO:0006096">
    <property type="term" value="P:glycolytic process"/>
    <property type="evidence" value="ECO:0007669"/>
    <property type="project" value="UniProtKB-UniRule"/>
</dbReference>
<dbReference type="CDD" id="cd00318">
    <property type="entry name" value="Phosphoglycerate_kinase"/>
    <property type="match status" value="1"/>
</dbReference>
<dbReference type="FunFam" id="3.40.50.1260:FF:000003">
    <property type="entry name" value="Phosphoglycerate kinase"/>
    <property type="match status" value="1"/>
</dbReference>
<dbReference type="FunFam" id="3.40.50.1260:FF:000006">
    <property type="entry name" value="Phosphoglycerate kinase"/>
    <property type="match status" value="1"/>
</dbReference>
<dbReference type="Gene3D" id="3.40.50.1260">
    <property type="entry name" value="Phosphoglycerate kinase, N-terminal domain"/>
    <property type="match status" value="2"/>
</dbReference>
<dbReference type="HAMAP" id="MF_00145">
    <property type="entry name" value="Phosphoglyc_kinase"/>
    <property type="match status" value="1"/>
</dbReference>
<dbReference type="InterPro" id="IPR001576">
    <property type="entry name" value="Phosphoglycerate_kinase"/>
</dbReference>
<dbReference type="InterPro" id="IPR015824">
    <property type="entry name" value="Phosphoglycerate_kinase_N"/>
</dbReference>
<dbReference type="InterPro" id="IPR036043">
    <property type="entry name" value="Phosphoglycerate_kinase_sf"/>
</dbReference>
<dbReference type="PANTHER" id="PTHR11406">
    <property type="entry name" value="PHOSPHOGLYCERATE KINASE"/>
    <property type="match status" value="1"/>
</dbReference>
<dbReference type="PANTHER" id="PTHR11406:SF23">
    <property type="entry name" value="PHOSPHOGLYCERATE KINASE 1, CHLOROPLASTIC-RELATED"/>
    <property type="match status" value="1"/>
</dbReference>
<dbReference type="Pfam" id="PF00162">
    <property type="entry name" value="PGK"/>
    <property type="match status" value="1"/>
</dbReference>
<dbReference type="PIRSF" id="PIRSF000724">
    <property type="entry name" value="Pgk"/>
    <property type="match status" value="1"/>
</dbReference>
<dbReference type="PRINTS" id="PR00477">
    <property type="entry name" value="PHGLYCKINASE"/>
</dbReference>
<dbReference type="SUPFAM" id="SSF53748">
    <property type="entry name" value="Phosphoglycerate kinase"/>
    <property type="match status" value="1"/>
</dbReference>
<evidence type="ECO:0000255" key="1">
    <source>
        <dbReference type="HAMAP-Rule" id="MF_00145"/>
    </source>
</evidence>
<evidence type="ECO:0000269" key="2">
    <source ref="2"/>
</evidence>
<protein>
    <recommendedName>
        <fullName evidence="1">Phosphoglycerate kinase</fullName>
        <ecNumber evidence="1">2.7.2.3</ecNumber>
    </recommendedName>
</protein>
<name>PGK_NOSS1</name>
<proteinExistence type="evidence at protein level"/>
<accession>Q8YPR1</accession>
<gene>
    <name evidence="1" type="primary">pgk</name>
    <name type="ordered locus">all4131</name>
</gene>